<sequence>MDLLYRVKTLWAALRGNHYTWPAIDITLPGNRHFHLIGSIHMGSHDMAPLPTRLLKKLKNADALIVEADVSTSDTPFANLPACEALEERISEEQLQNLQHISQEMGISPSLFSTQPLWQIAMVLQATQAQKLGLRAEYGIDYQLLQAAKQQHKPVIELEGAENQIAMLLQLPDKGLALLDDTLTHWHTNARLLQQMMSWWLNAPPQNNDITLPNTFSQSLYDVLMHQRNLAWRDKLRAMPPGRYVVAVGALHLYGEGNLPQMLR</sequence>
<feature type="chain" id="PRO_0000168628" description="Uncharacterized protein YbaP">
    <location>
        <begin position="1"/>
        <end position="264"/>
    </location>
</feature>
<reference key="1">
    <citation type="submission" date="1997-01" db="EMBL/GenBank/DDBJ databases">
        <title>Sequence of minutes 4-25 of Escherichia coli.</title>
        <authorList>
            <person name="Chung E."/>
            <person name="Allen E."/>
            <person name="Araujo R."/>
            <person name="Aparicio A.M."/>
            <person name="Davis K."/>
            <person name="Duncan M."/>
            <person name="Federspiel N."/>
            <person name="Hyman R."/>
            <person name="Kalman S."/>
            <person name="Komp C."/>
            <person name="Kurdi O."/>
            <person name="Lew H."/>
            <person name="Lin D."/>
            <person name="Namath A."/>
            <person name="Oefner P."/>
            <person name="Roberts D."/>
            <person name="Schramm S."/>
            <person name="Davis R.W."/>
        </authorList>
    </citation>
    <scope>NUCLEOTIDE SEQUENCE [LARGE SCALE GENOMIC DNA]</scope>
    <source>
        <strain>K12 / MG1655 / ATCC 47076</strain>
    </source>
</reference>
<reference key="2">
    <citation type="journal article" date="1997" name="Science">
        <title>The complete genome sequence of Escherichia coli K-12.</title>
        <authorList>
            <person name="Blattner F.R."/>
            <person name="Plunkett G. III"/>
            <person name="Bloch C.A."/>
            <person name="Perna N.T."/>
            <person name="Burland V."/>
            <person name="Riley M."/>
            <person name="Collado-Vides J."/>
            <person name="Glasner J.D."/>
            <person name="Rode C.K."/>
            <person name="Mayhew G.F."/>
            <person name="Gregor J."/>
            <person name="Davis N.W."/>
            <person name="Kirkpatrick H.A."/>
            <person name="Goeden M.A."/>
            <person name="Rose D.J."/>
            <person name="Mau B."/>
            <person name="Shao Y."/>
        </authorList>
    </citation>
    <scope>NUCLEOTIDE SEQUENCE [LARGE SCALE GENOMIC DNA]</scope>
    <source>
        <strain>K12 / MG1655 / ATCC 47076</strain>
    </source>
</reference>
<reference key="3">
    <citation type="journal article" date="2006" name="Mol. Syst. Biol.">
        <title>Highly accurate genome sequences of Escherichia coli K-12 strains MG1655 and W3110.</title>
        <authorList>
            <person name="Hayashi K."/>
            <person name="Morooka N."/>
            <person name="Yamamoto Y."/>
            <person name="Fujita K."/>
            <person name="Isono K."/>
            <person name="Choi S."/>
            <person name="Ohtsubo E."/>
            <person name="Baba T."/>
            <person name="Wanner B.L."/>
            <person name="Mori H."/>
            <person name="Horiuchi T."/>
        </authorList>
    </citation>
    <scope>NUCLEOTIDE SEQUENCE [LARGE SCALE GENOMIC DNA]</scope>
    <source>
        <strain>K12 / W3110 / ATCC 27325 / DSM 5911</strain>
    </source>
</reference>
<keyword id="KW-1185">Reference proteome</keyword>
<protein>
    <recommendedName>
        <fullName>Uncharacterized protein YbaP</fullName>
    </recommendedName>
</protein>
<proteinExistence type="predicted"/>
<name>YBAP_ECOLI</name>
<gene>
    <name type="primary">ybaP</name>
    <name type="ordered locus">b0482</name>
    <name type="ordered locus">JW0471</name>
</gene>
<organism>
    <name type="scientific">Escherichia coli (strain K12)</name>
    <dbReference type="NCBI Taxonomy" id="83333"/>
    <lineage>
        <taxon>Bacteria</taxon>
        <taxon>Pseudomonadati</taxon>
        <taxon>Pseudomonadota</taxon>
        <taxon>Gammaproteobacteria</taxon>
        <taxon>Enterobacterales</taxon>
        <taxon>Enterobacteriaceae</taxon>
        <taxon>Escherichia</taxon>
    </lineage>
</organism>
<accession>P77301</accession>
<accession>Q2MBU5</accession>
<dbReference type="EMBL" id="U82664">
    <property type="protein sequence ID" value="AAB40236.1"/>
    <property type="molecule type" value="Genomic_DNA"/>
</dbReference>
<dbReference type="EMBL" id="U00096">
    <property type="protein sequence ID" value="AAC73584.1"/>
    <property type="molecule type" value="Genomic_DNA"/>
</dbReference>
<dbReference type="EMBL" id="AP009048">
    <property type="protein sequence ID" value="BAE76261.1"/>
    <property type="molecule type" value="Genomic_DNA"/>
</dbReference>
<dbReference type="PIR" id="A64779">
    <property type="entry name" value="A64779"/>
</dbReference>
<dbReference type="RefSeq" id="NP_415015.1">
    <property type="nucleotide sequence ID" value="NC_000913.3"/>
</dbReference>
<dbReference type="RefSeq" id="WP_000365173.1">
    <property type="nucleotide sequence ID" value="NZ_LN832404.1"/>
</dbReference>
<dbReference type="BioGRID" id="4261398">
    <property type="interactions" value="22"/>
</dbReference>
<dbReference type="FunCoup" id="P77301">
    <property type="interactions" value="12"/>
</dbReference>
<dbReference type="IntAct" id="P77301">
    <property type="interactions" value="12"/>
</dbReference>
<dbReference type="STRING" id="511145.b0482"/>
<dbReference type="PaxDb" id="511145-b0482"/>
<dbReference type="DNASU" id="945124"/>
<dbReference type="EnsemblBacteria" id="AAC73584">
    <property type="protein sequence ID" value="AAC73584"/>
    <property type="gene ID" value="b0482"/>
</dbReference>
<dbReference type="GeneID" id="945124"/>
<dbReference type="KEGG" id="ecj:JW0471"/>
<dbReference type="KEGG" id="eco:b0482"/>
<dbReference type="KEGG" id="ecoc:C3026_02370"/>
<dbReference type="PATRIC" id="fig|511145.12.peg.502"/>
<dbReference type="EchoBASE" id="EB3033"/>
<dbReference type="eggNOG" id="COG3735">
    <property type="taxonomic scope" value="Bacteria"/>
</dbReference>
<dbReference type="HOGENOM" id="CLU_057525_3_0_6"/>
<dbReference type="InParanoid" id="P77301"/>
<dbReference type="OMA" id="QTMISWW"/>
<dbReference type="OrthoDB" id="357294at2"/>
<dbReference type="PhylomeDB" id="P77301"/>
<dbReference type="BioCyc" id="EcoCyc:G6258-MONOMER"/>
<dbReference type="PRO" id="PR:P77301"/>
<dbReference type="Proteomes" id="UP000000625">
    <property type="component" value="Chromosome"/>
</dbReference>
<dbReference type="CDD" id="cd14789">
    <property type="entry name" value="Tiki"/>
    <property type="match status" value="1"/>
</dbReference>
<dbReference type="InterPro" id="IPR002816">
    <property type="entry name" value="TraB/PrgY/GumN_fam"/>
</dbReference>
<dbReference type="InterPro" id="IPR047111">
    <property type="entry name" value="YbaP-like"/>
</dbReference>
<dbReference type="PANTHER" id="PTHR40590:SF1">
    <property type="entry name" value="CYTOPLASMIC PROTEIN"/>
    <property type="match status" value="1"/>
</dbReference>
<dbReference type="PANTHER" id="PTHR40590">
    <property type="entry name" value="CYTOPLASMIC PROTEIN-RELATED"/>
    <property type="match status" value="1"/>
</dbReference>
<dbReference type="Pfam" id="PF01963">
    <property type="entry name" value="TraB_PrgY_gumN"/>
    <property type="match status" value="1"/>
</dbReference>